<comment type="function">
    <text evidence="1">Part of the high-affinity ATP-driven potassium transport (or Kdp) system, which catalyzes the hydrolysis of ATP coupled with the electrogenic transport of potassium into the cytoplasm. This subunit binds the periplasmic potassium ions and delivers the ions to the membrane domain of KdpB through an intramembrane tunnel.</text>
</comment>
<comment type="subunit">
    <text evidence="1">The system is composed of three essential subunits: KdpA, KdpB and KdpC.</text>
</comment>
<comment type="subcellular location">
    <subcellularLocation>
        <location evidence="1">Cell inner membrane</location>
        <topology evidence="1">Multi-pass membrane protein</topology>
    </subcellularLocation>
</comment>
<comment type="similarity">
    <text evidence="1">Belongs to the KdpA family.</text>
</comment>
<gene>
    <name evidence="1" type="primary">kdpA</name>
    <name type="ordered locus">RPA3004</name>
</gene>
<organism>
    <name type="scientific">Rhodopseudomonas palustris (strain ATCC BAA-98 / CGA009)</name>
    <dbReference type="NCBI Taxonomy" id="258594"/>
    <lineage>
        <taxon>Bacteria</taxon>
        <taxon>Pseudomonadati</taxon>
        <taxon>Pseudomonadota</taxon>
        <taxon>Alphaproteobacteria</taxon>
        <taxon>Hyphomicrobiales</taxon>
        <taxon>Nitrobacteraceae</taxon>
        <taxon>Rhodopseudomonas</taxon>
    </lineage>
</organism>
<name>KDPA_RHOPA</name>
<sequence>MTFIGWCQIALFGAVVVALVKPLGWYMTRVFAGEWTPLTPVLRPVETMLYRAAGVDPKQEQHWLTFTLAMLLFHIGGFAIIYAVLRLQALLPFNPAEQGAVAPDLAFNTAISFLTNTNWQNYGGESTLSYLSQMLALTHQNFLSAATGIVLAMALIRGFSRASVRTIGNFWVDITRCTLYVLLPICIPYALFLVWQGMPQTLGSYVDATTLEGAKQTIAVGPVASQVAIKMLGTNGGGFFNANAAHPFENPTALSNFVQMLSIFVLGAALTNVFGRMIGNQRQGWAILGVMGVLFVVGIAVAYWAEASGTATLDALGITGGNMEGKEVRFGIVASALFAVVTTAASCGAVNAMHDSFTALGGMIPLINMQLGEIIVGGVGAGLYGMLLFVVLAIFVAGLMVGRTPEYVGKKIEAREVKMAMLAILVLPLMYLGWTAIAVVLPSAVASMGNAGPHGFSEVLYAFTSATANNGSAFGGLTGNTFFYNLTLATAMFVGRFMMIVPTMAIAGSLAGKKLVPPSAGTLPTTGGLFVGLVVGVILIIGGLTFFPALALGPIVEQVSMSAKTLF</sequence>
<keyword id="KW-0997">Cell inner membrane</keyword>
<keyword id="KW-1003">Cell membrane</keyword>
<keyword id="KW-0406">Ion transport</keyword>
<keyword id="KW-0472">Membrane</keyword>
<keyword id="KW-0630">Potassium</keyword>
<keyword id="KW-0633">Potassium transport</keyword>
<keyword id="KW-0812">Transmembrane</keyword>
<keyword id="KW-1133">Transmembrane helix</keyword>
<keyword id="KW-0813">Transport</keyword>
<protein>
    <recommendedName>
        <fullName evidence="1">Potassium-transporting ATPase potassium-binding subunit</fullName>
    </recommendedName>
    <alternativeName>
        <fullName evidence="1">ATP phosphohydrolase [potassium-transporting] A chain</fullName>
    </alternativeName>
    <alternativeName>
        <fullName evidence="1">Potassium-binding and translocating subunit A</fullName>
    </alternativeName>
    <alternativeName>
        <fullName evidence="1">Potassium-translocating ATPase A chain</fullName>
    </alternativeName>
</protein>
<reference key="1">
    <citation type="journal article" date="2004" name="Nat. Biotechnol.">
        <title>Complete genome sequence of the metabolically versatile photosynthetic bacterium Rhodopseudomonas palustris.</title>
        <authorList>
            <person name="Larimer F.W."/>
            <person name="Chain P."/>
            <person name="Hauser L."/>
            <person name="Lamerdin J.E."/>
            <person name="Malfatti S."/>
            <person name="Do L."/>
            <person name="Land M.L."/>
            <person name="Pelletier D.A."/>
            <person name="Beatty J.T."/>
            <person name="Lang A.S."/>
            <person name="Tabita F.R."/>
            <person name="Gibson J.L."/>
            <person name="Hanson T.E."/>
            <person name="Bobst C."/>
            <person name="Torres y Torres J.L."/>
            <person name="Peres C."/>
            <person name="Harrison F.H."/>
            <person name="Gibson J."/>
            <person name="Harwood C.S."/>
        </authorList>
    </citation>
    <scope>NUCLEOTIDE SEQUENCE [LARGE SCALE GENOMIC DNA]</scope>
    <source>
        <strain>ATCC BAA-98 / CGA009</strain>
    </source>
</reference>
<dbReference type="EMBL" id="BX572602">
    <property type="protein sequence ID" value="CAE28445.1"/>
    <property type="molecule type" value="Genomic_DNA"/>
</dbReference>
<dbReference type="RefSeq" id="WP_011158552.1">
    <property type="nucleotide sequence ID" value="NZ_CP116810.1"/>
</dbReference>
<dbReference type="SMR" id="Q6N5H0"/>
<dbReference type="STRING" id="258594.RPA3004"/>
<dbReference type="GeneID" id="66894089"/>
<dbReference type="eggNOG" id="COG2060">
    <property type="taxonomic scope" value="Bacteria"/>
</dbReference>
<dbReference type="HOGENOM" id="CLU_018614_3_0_5"/>
<dbReference type="PhylomeDB" id="Q6N5H0"/>
<dbReference type="GO" id="GO:0005886">
    <property type="term" value="C:plasma membrane"/>
    <property type="evidence" value="ECO:0007669"/>
    <property type="project" value="UniProtKB-SubCell"/>
</dbReference>
<dbReference type="GO" id="GO:0008556">
    <property type="term" value="F:P-type potassium transmembrane transporter activity"/>
    <property type="evidence" value="ECO:0007669"/>
    <property type="project" value="InterPro"/>
</dbReference>
<dbReference type="GO" id="GO:0030955">
    <property type="term" value="F:potassium ion binding"/>
    <property type="evidence" value="ECO:0007669"/>
    <property type="project" value="UniProtKB-UniRule"/>
</dbReference>
<dbReference type="HAMAP" id="MF_00275">
    <property type="entry name" value="KdpA"/>
    <property type="match status" value="1"/>
</dbReference>
<dbReference type="InterPro" id="IPR004623">
    <property type="entry name" value="KdpA"/>
</dbReference>
<dbReference type="NCBIfam" id="TIGR00680">
    <property type="entry name" value="kdpA"/>
    <property type="match status" value="1"/>
</dbReference>
<dbReference type="PANTHER" id="PTHR30607">
    <property type="entry name" value="POTASSIUM-TRANSPORTING ATPASE A CHAIN"/>
    <property type="match status" value="1"/>
</dbReference>
<dbReference type="PANTHER" id="PTHR30607:SF2">
    <property type="entry name" value="POTASSIUM-TRANSPORTING ATPASE POTASSIUM-BINDING SUBUNIT"/>
    <property type="match status" value="1"/>
</dbReference>
<dbReference type="Pfam" id="PF03814">
    <property type="entry name" value="KdpA"/>
    <property type="match status" value="1"/>
</dbReference>
<dbReference type="PIRSF" id="PIRSF001294">
    <property type="entry name" value="K_ATPaseA"/>
    <property type="match status" value="1"/>
</dbReference>
<evidence type="ECO:0000255" key="1">
    <source>
        <dbReference type="HAMAP-Rule" id="MF_00275"/>
    </source>
</evidence>
<feature type="chain" id="PRO_0000166519" description="Potassium-transporting ATPase potassium-binding subunit">
    <location>
        <begin position="1"/>
        <end position="567"/>
    </location>
</feature>
<feature type="transmembrane region" description="Helical" evidence="1">
    <location>
        <begin position="3"/>
        <end position="23"/>
    </location>
</feature>
<feature type="transmembrane region" description="Helical" evidence="1">
    <location>
        <begin position="64"/>
        <end position="84"/>
    </location>
</feature>
<feature type="transmembrane region" description="Helical" evidence="1">
    <location>
        <begin position="136"/>
        <end position="156"/>
    </location>
</feature>
<feature type="transmembrane region" description="Helical" evidence="1">
    <location>
        <begin position="179"/>
        <end position="199"/>
    </location>
</feature>
<feature type="transmembrane region" description="Helical" evidence="1">
    <location>
        <begin position="254"/>
        <end position="274"/>
    </location>
</feature>
<feature type="transmembrane region" description="Helical" evidence="1">
    <location>
        <begin position="285"/>
        <end position="305"/>
    </location>
</feature>
<feature type="transmembrane region" description="Helical" evidence="1">
    <location>
        <begin position="330"/>
        <end position="350"/>
    </location>
</feature>
<feature type="transmembrane region" description="Helical" evidence="1">
    <location>
        <begin position="357"/>
        <end position="376"/>
    </location>
</feature>
<feature type="transmembrane region" description="Helical" evidence="1">
    <location>
        <begin position="421"/>
        <end position="441"/>
    </location>
</feature>
<feature type="transmembrane region" description="Helical" evidence="1">
    <location>
        <begin position="473"/>
        <end position="495"/>
    </location>
</feature>
<feature type="transmembrane region" description="Helical" evidence="1">
    <location>
        <begin position="527"/>
        <end position="547"/>
    </location>
</feature>
<accession>Q6N5H0</accession>
<proteinExistence type="inferred from homology"/>